<feature type="chain" id="PRO_1000132529" description="Bifunctional uridylyltransferase/uridylyl-removing enzyme">
    <location>
        <begin position="1"/>
        <end position="890"/>
    </location>
</feature>
<feature type="domain" description="HD" evidence="2">
    <location>
        <begin position="468"/>
        <end position="590"/>
    </location>
</feature>
<feature type="domain" description="ACT 1" evidence="1">
    <location>
        <begin position="709"/>
        <end position="789"/>
    </location>
</feature>
<feature type="domain" description="ACT 2" evidence="1">
    <location>
        <begin position="816"/>
        <end position="890"/>
    </location>
</feature>
<feature type="region of interest" description="Uridylyltransferase">
    <location>
        <begin position="1"/>
        <end position="349"/>
    </location>
</feature>
<feature type="region of interest" description="Uridylyl-removing">
    <location>
        <begin position="350"/>
        <end position="708"/>
    </location>
</feature>
<keyword id="KW-0378">Hydrolase</keyword>
<keyword id="KW-0460">Magnesium</keyword>
<keyword id="KW-0511">Multifunctional enzyme</keyword>
<keyword id="KW-0548">Nucleotidyltransferase</keyword>
<keyword id="KW-1185">Reference proteome</keyword>
<keyword id="KW-0677">Repeat</keyword>
<keyword id="KW-0808">Transferase</keyword>
<accession>B7LGM7</accession>
<name>GLND_ECO55</name>
<comment type="function">
    <text evidence="1">Modifies, by uridylylation and deuridylylation, the PII regulatory proteins (GlnB and homologs), in response to the nitrogen status of the cell that GlnD senses through the glutamine level. Under low glutamine levels, catalyzes the conversion of the PII proteins and UTP to PII-UMP and PPi, while under higher glutamine levels, GlnD hydrolyzes PII-UMP to PII and UMP (deuridylylation). Thus, controls uridylylation state and activity of the PII proteins, and plays an important role in the regulation of nitrogen assimilation and metabolism.</text>
</comment>
<comment type="catalytic activity">
    <reaction evidence="1">
        <text>[protein-PII]-L-tyrosine + UTP = [protein-PII]-uridylyl-L-tyrosine + diphosphate</text>
        <dbReference type="Rhea" id="RHEA:13673"/>
        <dbReference type="Rhea" id="RHEA-COMP:12147"/>
        <dbReference type="Rhea" id="RHEA-COMP:12148"/>
        <dbReference type="ChEBI" id="CHEBI:33019"/>
        <dbReference type="ChEBI" id="CHEBI:46398"/>
        <dbReference type="ChEBI" id="CHEBI:46858"/>
        <dbReference type="ChEBI" id="CHEBI:90602"/>
        <dbReference type="EC" id="2.7.7.59"/>
    </reaction>
</comment>
<comment type="catalytic activity">
    <reaction evidence="1">
        <text>[protein-PII]-uridylyl-L-tyrosine + H2O = [protein-PII]-L-tyrosine + UMP + H(+)</text>
        <dbReference type="Rhea" id="RHEA:48600"/>
        <dbReference type="Rhea" id="RHEA-COMP:12147"/>
        <dbReference type="Rhea" id="RHEA-COMP:12148"/>
        <dbReference type="ChEBI" id="CHEBI:15377"/>
        <dbReference type="ChEBI" id="CHEBI:15378"/>
        <dbReference type="ChEBI" id="CHEBI:46858"/>
        <dbReference type="ChEBI" id="CHEBI:57865"/>
        <dbReference type="ChEBI" id="CHEBI:90602"/>
    </reaction>
</comment>
<comment type="cofactor">
    <cofactor evidence="1">
        <name>Mg(2+)</name>
        <dbReference type="ChEBI" id="CHEBI:18420"/>
    </cofactor>
</comment>
<comment type="activity regulation">
    <text evidence="1">Uridylyltransferase (UTase) activity is inhibited by glutamine, while glutamine activates uridylyl-removing (UR) activity.</text>
</comment>
<comment type="domain">
    <text evidence="1">Has four distinct domains: an N-terminal nucleotidyltransferase (NT) domain responsible for UTase activity, a central HD domain that encodes UR activity, and two C-terminal ACT domains that seem to have a role in glutamine sensing.</text>
</comment>
<comment type="similarity">
    <text evidence="1">Belongs to the GlnD family.</text>
</comment>
<protein>
    <recommendedName>
        <fullName evidence="1">Bifunctional uridylyltransferase/uridylyl-removing enzyme</fullName>
        <shortName evidence="1">UTase/UR</shortName>
    </recommendedName>
    <alternativeName>
        <fullName evidence="1">Bifunctional [protein-PII] modification enzyme</fullName>
    </alternativeName>
    <alternativeName>
        <fullName evidence="1">Bifunctional nitrogen sensor protein</fullName>
    </alternativeName>
    <domain>
        <recommendedName>
            <fullName evidence="1">[Protein-PII] uridylyltransferase</fullName>
            <shortName evidence="1">PII uridylyltransferase</shortName>
            <shortName evidence="1">UTase</shortName>
            <ecNumber evidence="1">2.7.7.59</ecNumber>
        </recommendedName>
    </domain>
    <domain>
        <recommendedName>
            <fullName evidence="1">[Protein-PII]-UMP uridylyl-removing enzyme</fullName>
            <shortName evidence="1">UR</shortName>
            <ecNumber evidence="1">3.1.4.-</ecNumber>
        </recommendedName>
    </domain>
</protein>
<reference key="1">
    <citation type="journal article" date="2009" name="PLoS Genet.">
        <title>Organised genome dynamics in the Escherichia coli species results in highly diverse adaptive paths.</title>
        <authorList>
            <person name="Touchon M."/>
            <person name="Hoede C."/>
            <person name="Tenaillon O."/>
            <person name="Barbe V."/>
            <person name="Baeriswyl S."/>
            <person name="Bidet P."/>
            <person name="Bingen E."/>
            <person name="Bonacorsi S."/>
            <person name="Bouchier C."/>
            <person name="Bouvet O."/>
            <person name="Calteau A."/>
            <person name="Chiapello H."/>
            <person name="Clermont O."/>
            <person name="Cruveiller S."/>
            <person name="Danchin A."/>
            <person name="Diard M."/>
            <person name="Dossat C."/>
            <person name="Karoui M.E."/>
            <person name="Frapy E."/>
            <person name="Garry L."/>
            <person name="Ghigo J.M."/>
            <person name="Gilles A.M."/>
            <person name="Johnson J."/>
            <person name="Le Bouguenec C."/>
            <person name="Lescat M."/>
            <person name="Mangenot S."/>
            <person name="Martinez-Jehanne V."/>
            <person name="Matic I."/>
            <person name="Nassif X."/>
            <person name="Oztas S."/>
            <person name="Petit M.A."/>
            <person name="Pichon C."/>
            <person name="Rouy Z."/>
            <person name="Ruf C.S."/>
            <person name="Schneider D."/>
            <person name="Tourret J."/>
            <person name="Vacherie B."/>
            <person name="Vallenet D."/>
            <person name="Medigue C."/>
            <person name="Rocha E.P.C."/>
            <person name="Denamur E."/>
        </authorList>
    </citation>
    <scope>NUCLEOTIDE SEQUENCE [LARGE SCALE GENOMIC DNA]</scope>
    <source>
        <strain>55989 / EAEC</strain>
    </source>
</reference>
<organism>
    <name type="scientific">Escherichia coli (strain 55989 / EAEC)</name>
    <dbReference type="NCBI Taxonomy" id="585055"/>
    <lineage>
        <taxon>Bacteria</taxon>
        <taxon>Pseudomonadati</taxon>
        <taxon>Pseudomonadota</taxon>
        <taxon>Gammaproteobacteria</taxon>
        <taxon>Enterobacterales</taxon>
        <taxon>Enterobacteriaceae</taxon>
        <taxon>Escherichia</taxon>
    </lineage>
</organism>
<gene>
    <name evidence="1" type="primary">glnD</name>
    <name type="ordered locus">EC55989_0160</name>
</gene>
<sequence length="890" mass="102396">MNTLPEQYANTALPTLPGQPQNPCVWPRDELTVGGIKAHIDTFQRWLGDAFDNGISAEQLIEARTEFIDQLLQRLWIEAGFSQIADLALVAVGGYGRGELHPLSDIDLLILSRKKLPDDQAQKVGELLTLLWDVKLEVGHSVRTLEECMLEGLSDLTVATNLIESRLLIGDVALFLELQKHIFSEGFWPSDKFYAAKVEEQNQRHQRYHGTSYNLEPDIKSSPGGLRDIHTLQWVARRHFGATSLDEMVGFGFLTSAERAELNECLHILWRIRFALHLVVSRYDNRLLFDRQLSVAQRLNYSGEGNEPVERMMKDYFRVTRRVSELNQMLLQLFDEAILALPADEKPRPIDDEFQLRGTLIDLRDETLFMRQPEAILRMFYTMVRNSAITGIYSTTLRQLRHARRHLQQPLCNIPEARKLFLSILRHPGAVRRGLLPMHRHSVLGAYMPQWSHIVGQMQFDLFHAYTVDEHTIRVMLKLESFASEETRQRHPLCVDVWPRLPSTELIFIAALFHDIAKGRGGDHSILGAQDVVHFAELHGLNSRETQLVAWLVRQHLLMSVTAQRRDIQDPEVIKQFAEEVQTENRLRYLVCLTVADICATNETLWNSWKQSLLRELYFATEKQLRRGMQNTPDMRERVRHHQLQALALLRMDNIDEEALHQIWSRCRANYFVRHSPNQLAWHARHLLQHDLSKPLVLLSPQATRGGTEIFIWSPDRPYLFAAVCAELDRRNLSVHDAQIFTTRDGMAMDTFIVLEPDGSPLSADRHEVIRFGLEQVLTQSSWQPPQPRRQPAKLRHFTVETEVTFLPTHTDRKSFLELIALDQPGLLARVGKIFADLGISLHGARITTIGERVEDLFIIATADRRALNNELQQEVHQRLTEALNPNDKG</sequence>
<proteinExistence type="inferred from homology"/>
<evidence type="ECO:0000255" key="1">
    <source>
        <dbReference type="HAMAP-Rule" id="MF_00277"/>
    </source>
</evidence>
<evidence type="ECO:0000255" key="2">
    <source>
        <dbReference type="PROSITE-ProRule" id="PRU01175"/>
    </source>
</evidence>
<dbReference type="EC" id="2.7.7.59" evidence="1"/>
<dbReference type="EC" id="3.1.4.-" evidence="1"/>
<dbReference type="EMBL" id="CU928145">
    <property type="protein sequence ID" value="CAU96046.1"/>
    <property type="molecule type" value="Genomic_DNA"/>
</dbReference>
<dbReference type="RefSeq" id="WP_001094571.1">
    <property type="nucleotide sequence ID" value="NC_011748.1"/>
</dbReference>
<dbReference type="SMR" id="B7LGM7"/>
<dbReference type="GeneID" id="75202020"/>
<dbReference type="KEGG" id="eck:EC55989_0160"/>
<dbReference type="HOGENOM" id="CLU_012833_0_0_6"/>
<dbReference type="Proteomes" id="UP000000746">
    <property type="component" value="Chromosome"/>
</dbReference>
<dbReference type="GO" id="GO:0008773">
    <property type="term" value="F:[protein-PII] uridylyltransferase activity"/>
    <property type="evidence" value="ECO:0007669"/>
    <property type="project" value="UniProtKB-UniRule"/>
</dbReference>
<dbReference type="GO" id="GO:0008081">
    <property type="term" value="F:phosphoric diester hydrolase activity"/>
    <property type="evidence" value="ECO:0007669"/>
    <property type="project" value="UniProtKB-UniRule"/>
</dbReference>
<dbReference type="GO" id="GO:0006808">
    <property type="term" value="P:regulation of nitrogen utilization"/>
    <property type="evidence" value="ECO:0007669"/>
    <property type="project" value="UniProtKB-UniRule"/>
</dbReference>
<dbReference type="CDD" id="cd04899">
    <property type="entry name" value="ACT_ACR-UUR-like_2"/>
    <property type="match status" value="1"/>
</dbReference>
<dbReference type="CDD" id="cd04900">
    <property type="entry name" value="ACT_UUR-like_1"/>
    <property type="match status" value="1"/>
</dbReference>
<dbReference type="CDD" id="cd00077">
    <property type="entry name" value="HDc"/>
    <property type="match status" value="1"/>
</dbReference>
<dbReference type="CDD" id="cd05401">
    <property type="entry name" value="NT_GlnE_GlnD_like"/>
    <property type="match status" value="1"/>
</dbReference>
<dbReference type="FunFam" id="1.10.3210.10:FF:000005">
    <property type="entry name" value="Bifunctional uridylyltransferase/uridylyl-removing enzyme"/>
    <property type="match status" value="1"/>
</dbReference>
<dbReference type="Gene3D" id="1.10.3210.10">
    <property type="entry name" value="Hypothetical protein af1432"/>
    <property type="match status" value="1"/>
</dbReference>
<dbReference type="HAMAP" id="MF_00277">
    <property type="entry name" value="PII_uridylyl_transf"/>
    <property type="match status" value="1"/>
</dbReference>
<dbReference type="InterPro" id="IPR045865">
    <property type="entry name" value="ACT-like_dom_sf"/>
</dbReference>
<dbReference type="InterPro" id="IPR002912">
    <property type="entry name" value="ACT_dom"/>
</dbReference>
<dbReference type="InterPro" id="IPR003607">
    <property type="entry name" value="HD/PDEase_dom"/>
</dbReference>
<dbReference type="InterPro" id="IPR006674">
    <property type="entry name" value="HD_domain"/>
</dbReference>
<dbReference type="InterPro" id="IPR043519">
    <property type="entry name" value="NT_sf"/>
</dbReference>
<dbReference type="InterPro" id="IPR013546">
    <property type="entry name" value="PII_UdlTrfase/GS_AdlTrfase"/>
</dbReference>
<dbReference type="InterPro" id="IPR002934">
    <property type="entry name" value="Polymerase_NTP_transf_dom"/>
</dbReference>
<dbReference type="InterPro" id="IPR010043">
    <property type="entry name" value="UTase/UR"/>
</dbReference>
<dbReference type="NCBIfam" id="NF002487">
    <property type="entry name" value="PRK01759.1"/>
    <property type="match status" value="1"/>
</dbReference>
<dbReference type="NCBIfam" id="NF003448">
    <property type="entry name" value="PRK05007.1"/>
    <property type="match status" value="1"/>
</dbReference>
<dbReference type="NCBIfam" id="TIGR01693">
    <property type="entry name" value="UTase_glnD"/>
    <property type="match status" value="1"/>
</dbReference>
<dbReference type="PANTHER" id="PTHR47320">
    <property type="entry name" value="BIFUNCTIONAL URIDYLYLTRANSFERASE/URIDYLYL-REMOVING ENZYME"/>
    <property type="match status" value="1"/>
</dbReference>
<dbReference type="PANTHER" id="PTHR47320:SF1">
    <property type="entry name" value="BIFUNCTIONAL URIDYLYLTRANSFERASE_URIDYLYL-REMOVING ENZYME"/>
    <property type="match status" value="1"/>
</dbReference>
<dbReference type="Pfam" id="PF01842">
    <property type="entry name" value="ACT"/>
    <property type="match status" value="2"/>
</dbReference>
<dbReference type="Pfam" id="PF08335">
    <property type="entry name" value="GlnD_UR_UTase"/>
    <property type="match status" value="1"/>
</dbReference>
<dbReference type="Pfam" id="PF01966">
    <property type="entry name" value="HD"/>
    <property type="match status" value="1"/>
</dbReference>
<dbReference type="Pfam" id="PF01909">
    <property type="entry name" value="NTP_transf_2"/>
    <property type="match status" value="1"/>
</dbReference>
<dbReference type="PIRSF" id="PIRSF006288">
    <property type="entry name" value="PII_uridyltransf"/>
    <property type="match status" value="1"/>
</dbReference>
<dbReference type="SMART" id="SM00471">
    <property type="entry name" value="HDc"/>
    <property type="match status" value="1"/>
</dbReference>
<dbReference type="SUPFAM" id="SSF55021">
    <property type="entry name" value="ACT-like"/>
    <property type="match status" value="2"/>
</dbReference>
<dbReference type="SUPFAM" id="SSF109604">
    <property type="entry name" value="HD-domain/PDEase-like"/>
    <property type="match status" value="1"/>
</dbReference>
<dbReference type="SUPFAM" id="SSF81301">
    <property type="entry name" value="Nucleotidyltransferase"/>
    <property type="match status" value="1"/>
</dbReference>
<dbReference type="SUPFAM" id="SSF81593">
    <property type="entry name" value="Nucleotidyltransferase substrate binding subunit/domain"/>
    <property type="match status" value="1"/>
</dbReference>
<dbReference type="PROSITE" id="PS51671">
    <property type="entry name" value="ACT"/>
    <property type="match status" value="2"/>
</dbReference>
<dbReference type="PROSITE" id="PS51831">
    <property type="entry name" value="HD"/>
    <property type="match status" value="1"/>
</dbReference>